<dbReference type="EC" id="5.3.1.6"/>
<dbReference type="EMBL" id="FO080148">
    <property type="protein sequence ID" value="CCD61600.1"/>
    <property type="molecule type" value="Genomic_DNA"/>
</dbReference>
<dbReference type="PIR" id="T15307">
    <property type="entry name" value="T15307"/>
</dbReference>
<dbReference type="RefSeq" id="NP_498556.1">
    <property type="nucleotide sequence ID" value="NM_066155.8"/>
</dbReference>
<dbReference type="SMR" id="P41994"/>
<dbReference type="BioGRID" id="41207">
    <property type="interactions" value="16"/>
</dbReference>
<dbReference type="FunCoup" id="P41994">
    <property type="interactions" value="3160"/>
</dbReference>
<dbReference type="IntAct" id="P41994">
    <property type="interactions" value="2"/>
</dbReference>
<dbReference type="STRING" id="6239.B0280.3.1"/>
<dbReference type="PaxDb" id="6239-B0280.3.2"/>
<dbReference type="PeptideAtlas" id="P41994"/>
<dbReference type="EnsemblMetazoa" id="B0280.3.1">
    <property type="protein sequence ID" value="B0280.3.1"/>
    <property type="gene ID" value="WBGene00015101"/>
</dbReference>
<dbReference type="EnsemblMetazoa" id="B0280.3.2">
    <property type="protein sequence ID" value="B0280.3.2"/>
    <property type="gene ID" value="WBGene00015101"/>
</dbReference>
<dbReference type="GeneID" id="175995"/>
<dbReference type="KEGG" id="cel:CELE_B0280.3"/>
<dbReference type="UCSC" id="B0280.3.1">
    <property type="organism name" value="c. elegans"/>
</dbReference>
<dbReference type="AGR" id="WB:WBGene00015101"/>
<dbReference type="CTD" id="175995"/>
<dbReference type="WormBase" id="B0280.3">
    <property type="protein sequence ID" value="CE00733"/>
    <property type="gene ID" value="WBGene00015101"/>
    <property type="gene designation" value="rpia-1"/>
</dbReference>
<dbReference type="eggNOG" id="KOG3075">
    <property type="taxonomic scope" value="Eukaryota"/>
</dbReference>
<dbReference type="GeneTree" id="ENSGT00390000004352"/>
<dbReference type="HOGENOM" id="CLU_056590_0_2_1"/>
<dbReference type="InParanoid" id="P41994"/>
<dbReference type="OMA" id="ACHVQEK"/>
<dbReference type="OrthoDB" id="1555531at2759"/>
<dbReference type="PhylomeDB" id="P41994"/>
<dbReference type="Reactome" id="R-CEL-71336">
    <property type="pathway name" value="Pentose phosphate pathway"/>
</dbReference>
<dbReference type="UniPathway" id="UPA00115">
    <property type="reaction ID" value="UER00412"/>
</dbReference>
<dbReference type="PRO" id="PR:P41994"/>
<dbReference type="Proteomes" id="UP000001940">
    <property type="component" value="Chromosome III"/>
</dbReference>
<dbReference type="Bgee" id="WBGene00015101">
    <property type="expression patterns" value="Expressed in larva and 4 other cell types or tissues"/>
</dbReference>
<dbReference type="GO" id="GO:0005737">
    <property type="term" value="C:cytoplasm"/>
    <property type="evidence" value="ECO:0000318"/>
    <property type="project" value="GO_Central"/>
</dbReference>
<dbReference type="GO" id="GO:0004751">
    <property type="term" value="F:ribose-5-phosphate isomerase activity"/>
    <property type="evidence" value="ECO:0000318"/>
    <property type="project" value="GO_Central"/>
</dbReference>
<dbReference type="GO" id="GO:0006014">
    <property type="term" value="P:D-ribose metabolic process"/>
    <property type="evidence" value="ECO:0000318"/>
    <property type="project" value="GO_Central"/>
</dbReference>
<dbReference type="GO" id="GO:0009052">
    <property type="term" value="P:pentose-phosphate shunt, non-oxidative branch"/>
    <property type="evidence" value="ECO:0000318"/>
    <property type="project" value="GO_Central"/>
</dbReference>
<dbReference type="CDD" id="cd01398">
    <property type="entry name" value="RPI_A"/>
    <property type="match status" value="1"/>
</dbReference>
<dbReference type="FunFam" id="3.30.70.260:FF:000018">
    <property type="entry name" value="Ribose-5-phosphate isomerase A"/>
    <property type="match status" value="1"/>
</dbReference>
<dbReference type="FunFam" id="3.40.50.1360:FF:000001">
    <property type="entry name" value="Ribose-5-phosphate isomerase A"/>
    <property type="match status" value="1"/>
</dbReference>
<dbReference type="Gene3D" id="3.30.70.260">
    <property type="match status" value="1"/>
</dbReference>
<dbReference type="Gene3D" id="3.40.50.1360">
    <property type="match status" value="1"/>
</dbReference>
<dbReference type="InterPro" id="IPR037171">
    <property type="entry name" value="NagB/RpiA_transferase-like"/>
</dbReference>
<dbReference type="InterPro" id="IPR004788">
    <property type="entry name" value="Ribose5P_isomerase_type_A"/>
</dbReference>
<dbReference type="NCBIfam" id="NF001924">
    <property type="entry name" value="PRK00702.1"/>
    <property type="match status" value="1"/>
</dbReference>
<dbReference type="NCBIfam" id="TIGR00021">
    <property type="entry name" value="rpiA"/>
    <property type="match status" value="1"/>
</dbReference>
<dbReference type="PANTHER" id="PTHR11934">
    <property type="entry name" value="RIBOSE-5-PHOSPHATE ISOMERASE"/>
    <property type="match status" value="1"/>
</dbReference>
<dbReference type="PANTHER" id="PTHR11934:SF0">
    <property type="entry name" value="RIBOSE-5-PHOSPHATE ISOMERASE"/>
    <property type="match status" value="1"/>
</dbReference>
<dbReference type="Pfam" id="PF06026">
    <property type="entry name" value="Rib_5-P_isom_A"/>
    <property type="match status" value="1"/>
</dbReference>
<dbReference type="SUPFAM" id="SSF75445">
    <property type="entry name" value="D-ribose-5-phosphate isomerase (RpiA), lid domain"/>
    <property type="match status" value="1"/>
</dbReference>
<dbReference type="SUPFAM" id="SSF100950">
    <property type="entry name" value="NagB/RpiA/CoA transferase-like"/>
    <property type="match status" value="1"/>
</dbReference>
<accession>P41994</accession>
<proteinExistence type="inferred from homology"/>
<organism>
    <name type="scientific">Caenorhabditis elegans</name>
    <dbReference type="NCBI Taxonomy" id="6239"/>
    <lineage>
        <taxon>Eukaryota</taxon>
        <taxon>Metazoa</taxon>
        <taxon>Ecdysozoa</taxon>
        <taxon>Nematoda</taxon>
        <taxon>Chromadorea</taxon>
        <taxon>Rhabditida</taxon>
        <taxon>Rhabditina</taxon>
        <taxon>Rhabditomorpha</taxon>
        <taxon>Rhabditoidea</taxon>
        <taxon>Rhabditidae</taxon>
        <taxon>Peloderinae</taxon>
        <taxon>Caenorhabditis</taxon>
    </lineage>
</organism>
<keyword id="KW-0413">Isomerase</keyword>
<keyword id="KW-1185">Reference proteome</keyword>
<name>RPIA_CAEEL</name>
<evidence type="ECO:0000305" key="1"/>
<feature type="chain" id="PRO_0000158523" description="Probable-ribose 5-phosphate isomerase">
    <location>
        <begin position="1"/>
        <end position="251"/>
    </location>
</feature>
<gene>
    <name type="primary">rpia-1</name>
    <name type="ORF">B0280.3</name>
</gene>
<sequence>MVTSTGPEAELAPIEQAKKRAAFACGEKYVQSGCRLGVGSGSTVKYLVEYLKQGFQNGSLKDIICVPTSFLTKQWLIESGLPVSDLDSHPELDVCIDGADEVDGQFTCIKGGGGCLAQEKIVQTAAKNFYVIADYLKDSKHLGDRYPNVPIEVLPLAAQPLLRSIPRAEGGSCQLRQAVKKCGPIVTDNGNFIIDWQFEKNVSGRDWFAIQQRLANTPGIVETGLFIGCVDAVFFAYSDGSVKEIVNSKKH</sequence>
<protein>
    <recommendedName>
        <fullName>Probable-ribose 5-phosphate isomerase</fullName>
        <ecNumber>5.3.1.6</ecNumber>
    </recommendedName>
    <alternativeName>
        <fullName>Phosphoriboisomerase</fullName>
    </alternativeName>
</protein>
<reference key="1">
    <citation type="journal article" date="1998" name="Science">
        <title>Genome sequence of the nematode C. elegans: a platform for investigating biology.</title>
        <authorList>
            <consortium name="The C. elegans sequencing consortium"/>
        </authorList>
    </citation>
    <scope>NUCLEOTIDE SEQUENCE [LARGE SCALE GENOMIC DNA]</scope>
    <source>
        <strain>Bristol N2</strain>
    </source>
</reference>
<comment type="catalytic activity">
    <reaction>
        <text>aldehydo-D-ribose 5-phosphate = D-ribulose 5-phosphate</text>
        <dbReference type="Rhea" id="RHEA:14657"/>
        <dbReference type="ChEBI" id="CHEBI:58121"/>
        <dbReference type="ChEBI" id="CHEBI:58273"/>
        <dbReference type="EC" id="5.3.1.6"/>
    </reaction>
</comment>
<comment type="pathway">
    <text>Carbohydrate degradation; pentose phosphate pathway; D-ribose 5-phosphate from D-ribulose 5-phosphate (non-oxidative stage): step 1/1.</text>
</comment>
<comment type="similarity">
    <text evidence="1">Belongs to the ribose 5-phosphate isomerase family.</text>
</comment>